<name>PROB_TRIL1</name>
<gene>
    <name evidence="1" type="primary">proB</name>
    <name type="ordered locus">Glov_1011</name>
</gene>
<dbReference type="EC" id="2.7.2.11" evidence="1"/>
<dbReference type="EMBL" id="CP001089">
    <property type="protein sequence ID" value="ACD94734.1"/>
    <property type="molecule type" value="Genomic_DNA"/>
</dbReference>
<dbReference type="RefSeq" id="WP_012469084.1">
    <property type="nucleotide sequence ID" value="NC_010814.1"/>
</dbReference>
<dbReference type="SMR" id="B3E610"/>
<dbReference type="STRING" id="398767.Glov_1011"/>
<dbReference type="KEGG" id="glo:Glov_1011"/>
<dbReference type="eggNOG" id="COG0263">
    <property type="taxonomic scope" value="Bacteria"/>
</dbReference>
<dbReference type="HOGENOM" id="CLU_025400_2_0_7"/>
<dbReference type="OrthoDB" id="9804434at2"/>
<dbReference type="UniPathway" id="UPA00098">
    <property type="reaction ID" value="UER00359"/>
</dbReference>
<dbReference type="Proteomes" id="UP000002420">
    <property type="component" value="Chromosome"/>
</dbReference>
<dbReference type="GO" id="GO:0005829">
    <property type="term" value="C:cytosol"/>
    <property type="evidence" value="ECO:0007669"/>
    <property type="project" value="TreeGrafter"/>
</dbReference>
<dbReference type="GO" id="GO:0005524">
    <property type="term" value="F:ATP binding"/>
    <property type="evidence" value="ECO:0007669"/>
    <property type="project" value="UniProtKB-KW"/>
</dbReference>
<dbReference type="GO" id="GO:0004349">
    <property type="term" value="F:glutamate 5-kinase activity"/>
    <property type="evidence" value="ECO:0007669"/>
    <property type="project" value="UniProtKB-UniRule"/>
</dbReference>
<dbReference type="GO" id="GO:0003723">
    <property type="term" value="F:RNA binding"/>
    <property type="evidence" value="ECO:0007669"/>
    <property type="project" value="InterPro"/>
</dbReference>
<dbReference type="GO" id="GO:0055129">
    <property type="term" value="P:L-proline biosynthetic process"/>
    <property type="evidence" value="ECO:0007669"/>
    <property type="project" value="UniProtKB-UniRule"/>
</dbReference>
<dbReference type="CDD" id="cd04242">
    <property type="entry name" value="AAK_G5K_ProB"/>
    <property type="match status" value="1"/>
</dbReference>
<dbReference type="CDD" id="cd21157">
    <property type="entry name" value="PUA_G5K"/>
    <property type="match status" value="1"/>
</dbReference>
<dbReference type="FunFam" id="2.30.130.10:FF:000007">
    <property type="entry name" value="Glutamate 5-kinase"/>
    <property type="match status" value="1"/>
</dbReference>
<dbReference type="FunFam" id="3.40.1160.10:FF:000018">
    <property type="entry name" value="Glutamate 5-kinase"/>
    <property type="match status" value="1"/>
</dbReference>
<dbReference type="Gene3D" id="3.40.1160.10">
    <property type="entry name" value="Acetylglutamate kinase-like"/>
    <property type="match status" value="1"/>
</dbReference>
<dbReference type="Gene3D" id="2.30.130.10">
    <property type="entry name" value="PUA domain"/>
    <property type="match status" value="1"/>
</dbReference>
<dbReference type="HAMAP" id="MF_00456">
    <property type="entry name" value="ProB"/>
    <property type="match status" value="1"/>
</dbReference>
<dbReference type="InterPro" id="IPR036393">
    <property type="entry name" value="AceGlu_kinase-like_sf"/>
</dbReference>
<dbReference type="InterPro" id="IPR001048">
    <property type="entry name" value="Asp/Glu/Uridylate_kinase"/>
</dbReference>
<dbReference type="InterPro" id="IPR041739">
    <property type="entry name" value="G5K_ProB"/>
</dbReference>
<dbReference type="InterPro" id="IPR001057">
    <property type="entry name" value="Glu/AcGlu_kinase"/>
</dbReference>
<dbReference type="InterPro" id="IPR011529">
    <property type="entry name" value="Glu_5kinase"/>
</dbReference>
<dbReference type="InterPro" id="IPR005715">
    <property type="entry name" value="Glu_5kinase/COase_Synthase"/>
</dbReference>
<dbReference type="InterPro" id="IPR019797">
    <property type="entry name" value="Glutamate_5-kinase_CS"/>
</dbReference>
<dbReference type="InterPro" id="IPR002478">
    <property type="entry name" value="PUA"/>
</dbReference>
<dbReference type="InterPro" id="IPR015947">
    <property type="entry name" value="PUA-like_sf"/>
</dbReference>
<dbReference type="InterPro" id="IPR036974">
    <property type="entry name" value="PUA_sf"/>
</dbReference>
<dbReference type="NCBIfam" id="TIGR01027">
    <property type="entry name" value="proB"/>
    <property type="match status" value="1"/>
</dbReference>
<dbReference type="PANTHER" id="PTHR43654">
    <property type="entry name" value="GLUTAMATE 5-KINASE"/>
    <property type="match status" value="1"/>
</dbReference>
<dbReference type="PANTHER" id="PTHR43654:SF1">
    <property type="entry name" value="ISOPENTENYL PHOSPHATE KINASE"/>
    <property type="match status" value="1"/>
</dbReference>
<dbReference type="Pfam" id="PF00696">
    <property type="entry name" value="AA_kinase"/>
    <property type="match status" value="1"/>
</dbReference>
<dbReference type="Pfam" id="PF01472">
    <property type="entry name" value="PUA"/>
    <property type="match status" value="1"/>
</dbReference>
<dbReference type="PIRSF" id="PIRSF000729">
    <property type="entry name" value="GK"/>
    <property type="match status" value="1"/>
</dbReference>
<dbReference type="PRINTS" id="PR00474">
    <property type="entry name" value="GLU5KINASE"/>
</dbReference>
<dbReference type="SMART" id="SM00359">
    <property type="entry name" value="PUA"/>
    <property type="match status" value="1"/>
</dbReference>
<dbReference type="SUPFAM" id="SSF53633">
    <property type="entry name" value="Carbamate kinase-like"/>
    <property type="match status" value="1"/>
</dbReference>
<dbReference type="SUPFAM" id="SSF88697">
    <property type="entry name" value="PUA domain-like"/>
    <property type="match status" value="1"/>
</dbReference>
<dbReference type="PROSITE" id="PS00902">
    <property type="entry name" value="GLUTAMATE_5_KINASE"/>
    <property type="match status" value="1"/>
</dbReference>
<dbReference type="PROSITE" id="PS50890">
    <property type="entry name" value="PUA"/>
    <property type="match status" value="1"/>
</dbReference>
<proteinExistence type="inferred from homology"/>
<comment type="function">
    <text evidence="1">Catalyzes the transfer of a phosphate group to glutamate to form L-glutamate 5-phosphate.</text>
</comment>
<comment type="catalytic activity">
    <reaction evidence="1">
        <text>L-glutamate + ATP = L-glutamyl 5-phosphate + ADP</text>
        <dbReference type="Rhea" id="RHEA:14877"/>
        <dbReference type="ChEBI" id="CHEBI:29985"/>
        <dbReference type="ChEBI" id="CHEBI:30616"/>
        <dbReference type="ChEBI" id="CHEBI:58274"/>
        <dbReference type="ChEBI" id="CHEBI:456216"/>
        <dbReference type="EC" id="2.7.2.11"/>
    </reaction>
</comment>
<comment type="pathway">
    <text evidence="1">Amino-acid biosynthesis; L-proline biosynthesis; L-glutamate 5-semialdehyde from L-glutamate: step 1/2.</text>
</comment>
<comment type="subcellular location">
    <subcellularLocation>
        <location evidence="1">Cytoplasm</location>
    </subcellularLocation>
</comment>
<comment type="similarity">
    <text evidence="1">Belongs to the glutamate 5-kinase family.</text>
</comment>
<accession>B3E610</accession>
<protein>
    <recommendedName>
        <fullName evidence="1">Glutamate 5-kinase</fullName>
        <ecNumber evidence="1">2.7.2.11</ecNumber>
    </recommendedName>
    <alternativeName>
        <fullName evidence="1">Gamma-glutamyl kinase</fullName>
        <shortName evidence="1">GK</shortName>
    </alternativeName>
</protein>
<feature type="chain" id="PRO_1000125239" description="Glutamate 5-kinase">
    <location>
        <begin position="1"/>
        <end position="376"/>
    </location>
</feature>
<feature type="domain" description="PUA" evidence="1">
    <location>
        <begin position="281"/>
        <end position="359"/>
    </location>
</feature>
<feature type="binding site" evidence="1">
    <location>
        <position position="15"/>
    </location>
    <ligand>
        <name>ATP</name>
        <dbReference type="ChEBI" id="CHEBI:30616"/>
    </ligand>
</feature>
<feature type="binding site" evidence="1">
    <location>
        <position position="55"/>
    </location>
    <ligand>
        <name>substrate</name>
    </ligand>
</feature>
<feature type="binding site" evidence="1">
    <location>
        <position position="142"/>
    </location>
    <ligand>
        <name>substrate</name>
    </ligand>
</feature>
<feature type="binding site" evidence="1">
    <location>
        <position position="154"/>
    </location>
    <ligand>
        <name>substrate</name>
    </ligand>
</feature>
<feature type="binding site" evidence="1">
    <location>
        <begin position="174"/>
        <end position="175"/>
    </location>
    <ligand>
        <name>ATP</name>
        <dbReference type="ChEBI" id="CHEBI:30616"/>
    </ligand>
</feature>
<feature type="binding site" evidence="1">
    <location>
        <begin position="216"/>
        <end position="222"/>
    </location>
    <ligand>
        <name>ATP</name>
        <dbReference type="ChEBI" id="CHEBI:30616"/>
    </ligand>
</feature>
<organism>
    <name type="scientific">Trichlorobacter lovleyi (strain ATCC BAA-1151 / DSM 17278 / SZ)</name>
    <name type="common">Geobacter lovleyi</name>
    <dbReference type="NCBI Taxonomy" id="398767"/>
    <lineage>
        <taxon>Bacteria</taxon>
        <taxon>Pseudomonadati</taxon>
        <taxon>Thermodesulfobacteriota</taxon>
        <taxon>Desulfuromonadia</taxon>
        <taxon>Geobacterales</taxon>
        <taxon>Geobacteraceae</taxon>
        <taxon>Trichlorobacter</taxon>
    </lineage>
</organism>
<evidence type="ECO:0000255" key="1">
    <source>
        <dbReference type="HAMAP-Rule" id="MF_00456"/>
    </source>
</evidence>
<reference key="1">
    <citation type="submission" date="2008-05" db="EMBL/GenBank/DDBJ databases">
        <title>Complete sequence of chromosome of Geobacter lovleyi SZ.</title>
        <authorList>
            <consortium name="US DOE Joint Genome Institute"/>
            <person name="Lucas S."/>
            <person name="Copeland A."/>
            <person name="Lapidus A."/>
            <person name="Glavina del Rio T."/>
            <person name="Dalin E."/>
            <person name="Tice H."/>
            <person name="Bruce D."/>
            <person name="Goodwin L."/>
            <person name="Pitluck S."/>
            <person name="Chertkov O."/>
            <person name="Meincke L."/>
            <person name="Brettin T."/>
            <person name="Detter J.C."/>
            <person name="Han C."/>
            <person name="Tapia R."/>
            <person name="Kuske C.R."/>
            <person name="Schmutz J."/>
            <person name="Larimer F."/>
            <person name="Land M."/>
            <person name="Hauser L."/>
            <person name="Kyrpides N."/>
            <person name="Mikhailova N."/>
            <person name="Sung Y."/>
            <person name="Fletcher K.E."/>
            <person name="Ritalahti K.M."/>
            <person name="Loeffler F.E."/>
            <person name="Richardson P."/>
        </authorList>
    </citation>
    <scope>NUCLEOTIDE SEQUENCE [LARGE SCALE GENOMIC DNA]</scope>
    <source>
        <strain>ATCC BAA-1151 / DSM 17278 / SZ</strain>
    </source>
</reference>
<keyword id="KW-0028">Amino-acid biosynthesis</keyword>
<keyword id="KW-0067">ATP-binding</keyword>
<keyword id="KW-0963">Cytoplasm</keyword>
<keyword id="KW-0418">Kinase</keyword>
<keyword id="KW-0547">Nucleotide-binding</keyword>
<keyword id="KW-0641">Proline biosynthesis</keyword>
<keyword id="KW-1185">Reference proteome</keyword>
<keyword id="KW-0808">Transferase</keyword>
<sequence length="376" mass="39666">MRRGLLQQVRRVVIKVGSRVLTVEGGGLDYDAISRLCDEMAGLRQQGIEVILVSSGAVAAGRDALRSADTTLTIPQKQAAAAVGQPLLMQAYQQACTRHGLVTAQILLTAEDLANRNRFLNARTTLEALLTAGALPVINENDSVAVAEIKFGDNDNLSALVTSLAEADLLLILTDIEGLYSANPASDPDAELIPLVRSITREIERMAGGSGSNVGTGGMATKVTAAKKAARFGVPTILAPGKQPGVITAAVSGQEIGTLFLPATDGLNRRKHWIAYTLRPAGKVLVDAGAQKALVEKGTSLLPSGITGVEGRFERGRCVRICGPDGTEIARGLADYSSSEIQLIAGHKSAEIEQLLGYRYGDDVVHRDNLVLMTHS</sequence>